<feature type="chain" id="PRO_1000123461" description="4-hydroxy-3-methylbut-2-en-1-yl diphosphate synthase (flavodoxin)">
    <location>
        <begin position="1"/>
        <end position="353"/>
    </location>
</feature>
<feature type="binding site" evidence="1">
    <location>
        <position position="265"/>
    </location>
    <ligand>
        <name>[4Fe-4S] cluster</name>
        <dbReference type="ChEBI" id="CHEBI:49883"/>
    </ligand>
</feature>
<feature type="binding site" evidence="1">
    <location>
        <position position="268"/>
    </location>
    <ligand>
        <name>[4Fe-4S] cluster</name>
        <dbReference type="ChEBI" id="CHEBI:49883"/>
    </ligand>
</feature>
<feature type="binding site" evidence="1">
    <location>
        <position position="300"/>
    </location>
    <ligand>
        <name>[4Fe-4S] cluster</name>
        <dbReference type="ChEBI" id="CHEBI:49883"/>
    </ligand>
</feature>
<feature type="binding site" evidence="1">
    <location>
        <position position="307"/>
    </location>
    <ligand>
        <name>[4Fe-4S] cluster</name>
        <dbReference type="ChEBI" id="CHEBI:49883"/>
    </ligand>
</feature>
<name>ISPG_SULSY</name>
<organism>
    <name type="scientific">Sulfurihydrogenibium sp. (strain YO3AOP1)</name>
    <dbReference type="NCBI Taxonomy" id="436114"/>
    <lineage>
        <taxon>Bacteria</taxon>
        <taxon>Pseudomonadati</taxon>
        <taxon>Aquificota</taxon>
        <taxon>Aquificia</taxon>
        <taxon>Aquificales</taxon>
        <taxon>Hydrogenothermaceae</taxon>
        <taxon>Sulfurihydrogenibium</taxon>
    </lineage>
</organism>
<proteinExistence type="inferred from homology"/>
<dbReference type="EC" id="1.17.7.3" evidence="1"/>
<dbReference type="EMBL" id="CP001080">
    <property type="protein sequence ID" value="ACD66055.1"/>
    <property type="molecule type" value="Genomic_DNA"/>
</dbReference>
<dbReference type="RefSeq" id="WP_012459137.1">
    <property type="nucleotide sequence ID" value="NC_010730.1"/>
</dbReference>
<dbReference type="SMR" id="B2V7Y2"/>
<dbReference type="STRING" id="436114.SYO3AOP1_0412"/>
<dbReference type="KEGG" id="sul:SYO3AOP1_0412"/>
<dbReference type="eggNOG" id="COG0821">
    <property type="taxonomic scope" value="Bacteria"/>
</dbReference>
<dbReference type="HOGENOM" id="CLU_042258_0_0_0"/>
<dbReference type="UniPathway" id="UPA00056">
    <property type="reaction ID" value="UER00096"/>
</dbReference>
<dbReference type="GO" id="GO:0051539">
    <property type="term" value="F:4 iron, 4 sulfur cluster binding"/>
    <property type="evidence" value="ECO:0007669"/>
    <property type="project" value="UniProtKB-UniRule"/>
</dbReference>
<dbReference type="GO" id="GO:0046429">
    <property type="term" value="F:4-hydroxy-3-methylbut-2-en-1-yl diphosphate synthase activity (ferredoxin)"/>
    <property type="evidence" value="ECO:0007669"/>
    <property type="project" value="UniProtKB-UniRule"/>
</dbReference>
<dbReference type="GO" id="GO:0141197">
    <property type="term" value="F:4-hydroxy-3-methylbut-2-enyl-diphosphate synthase activity (flavodoxin)"/>
    <property type="evidence" value="ECO:0007669"/>
    <property type="project" value="UniProtKB-EC"/>
</dbReference>
<dbReference type="GO" id="GO:0005506">
    <property type="term" value="F:iron ion binding"/>
    <property type="evidence" value="ECO:0007669"/>
    <property type="project" value="InterPro"/>
</dbReference>
<dbReference type="GO" id="GO:0019288">
    <property type="term" value="P:isopentenyl diphosphate biosynthetic process, methylerythritol 4-phosphate pathway"/>
    <property type="evidence" value="ECO:0007669"/>
    <property type="project" value="UniProtKB-UniRule"/>
</dbReference>
<dbReference type="GO" id="GO:0016114">
    <property type="term" value="P:terpenoid biosynthetic process"/>
    <property type="evidence" value="ECO:0007669"/>
    <property type="project" value="InterPro"/>
</dbReference>
<dbReference type="FunFam" id="3.20.20.20:FF:000001">
    <property type="entry name" value="4-hydroxy-3-methylbut-2-en-1-yl diphosphate synthase (flavodoxin)"/>
    <property type="match status" value="1"/>
</dbReference>
<dbReference type="Gene3D" id="3.20.20.20">
    <property type="entry name" value="Dihydropteroate synthase-like"/>
    <property type="match status" value="1"/>
</dbReference>
<dbReference type="Gene3D" id="3.30.413.10">
    <property type="entry name" value="Sulfite Reductase Hemoprotein, domain 1"/>
    <property type="match status" value="1"/>
</dbReference>
<dbReference type="HAMAP" id="MF_00159">
    <property type="entry name" value="IspG"/>
    <property type="match status" value="1"/>
</dbReference>
<dbReference type="InterPro" id="IPR011005">
    <property type="entry name" value="Dihydropteroate_synth-like_sf"/>
</dbReference>
<dbReference type="InterPro" id="IPR036849">
    <property type="entry name" value="Enolase-like_C_sf"/>
</dbReference>
<dbReference type="InterPro" id="IPR016425">
    <property type="entry name" value="IspG_bac"/>
</dbReference>
<dbReference type="InterPro" id="IPR004588">
    <property type="entry name" value="IspG_bac-typ"/>
</dbReference>
<dbReference type="InterPro" id="IPR045854">
    <property type="entry name" value="NO2/SO3_Rdtase_4Fe4S_sf"/>
</dbReference>
<dbReference type="NCBIfam" id="TIGR00612">
    <property type="entry name" value="ispG_gcpE"/>
    <property type="match status" value="1"/>
</dbReference>
<dbReference type="NCBIfam" id="NF001540">
    <property type="entry name" value="PRK00366.1"/>
    <property type="match status" value="1"/>
</dbReference>
<dbReference type="PANTHER" id="PTHR30454">
    <property type="entry name" value="4-HYDROXY-3-METHYLBUT-2-EN-1-YL DIPHOSPHATE SYNTHASE"/>
    <property type="match status" value="1"/>
</dbReference>
<dbReference type="PANTHER" id="PTHR30454:SF0">
    <property type="entry name" value="4-HYDROXY-3-METHYLBUT-2-EN-1-YL DIPHOSPHATE SYNTHASE (FERREDOXIN), CHLOROPLASTIC"/>
    <property type="match status" value="1"/>
</dbReference>
<dbReference type="Pfam" id="PF04551">
    <property type="entry name" value="GcpE"/>
    <property type="match status" value="1"/>
</dbReference>
<dbReference type="PIRSF" id="PIRSF004640">
    <property type="entry name" value="IspG"/>
    <property type="match status" value="1"/>
</dbReference>
<dbReference type="SUPFAM" id="SSF51604">
    <property type="entry name" value="Enolase C-terminal domain-like"/>
    <property type="match status" value="1"/>
</dbReference>
<dbReference type="SUPFAM" id="SSF56014">
    <property type="entry name" value="Nitrite and sulphite reductase 4Fe-4S domain-like"/>
    <property type="match status" value="1"/>
</dbReference>
<protein>
    <recommendedName>
        <fullName evidence="1">4-hydroxy-3-methylbut-2-en-1-yl diphosphate synthase (flavodoxin)</fullName>
        <ecNumber evidence="1">1.17.7.3</ecNumber>
    </recommendedName>
    <alternativeName>
        <fullName evidence="1">1-hydroxy-2-methyl-2-(E)-butenyl 4-diphosphate synthase</fullName>
    </alternativeName>
</protein>
<sequence>MINRRKTRPVYVGNVKIGDGAPIVVQSMTDTKTHDIEATLNQINRLAKAGCEIIRVAVPREEDALALQEIVKNSPIPVIGDIHFSPRIAFLSLESGIHGIRLNPGNINDKGKIKEILQECKKKNIAVRLGVNSGSLEERLLEKYGYPSAEALAESALYWSEFFESVGFTNFKVSIKGSDVLQNIKANKIFAEKTDIPLHIGITEAGPAGRGSIKSAVGIGILLYEGIGDTVRVSLTADPEEEIKVVYQILQALDLRRKGVEIVSCPTCGRIEVNLPEVVKKVEEKLEAVDKPLKVAIMGCVVNAIGEAKEADIGLACGNKSAILFKKGVPIKRVSEEEMVEELLNEIQRMDNE</sequence>
<accession>B2V7Y2</accession>
<comment type="function">
    <text evidence="1">Converts 2C-methyl-D-erythritol 2,4-cyclodiphosphate (ME-2,4cPP) into 1-hydroxy-2-methyl-2-(E)-butenyl 4-diphosphate.</text>
</comment>
<comment type="catalytic activity">
    <reaction evidence="1">
        <text>(2E)-4-hydroxy-3-methylbut-2-enyl diphosphate + oxidized [flavodoxin] + H2O + 2 H(+) = 2-C-methyl-D-erythritol 2,4-cyclic diphosphate + reduced [flavodoxin]</text>
        <dbReference type="Rhea" id="RHEA:43604"/>
        <dbReference type="Rhea" id="RHEA-COMP:10622"/>
        <dbReference type="Rhea" id="RHEA-COMP:10623"/>
        <dbReference type="ChEBI" id="CHEBI:15377"/>
        <dbReference type="ChEBI" id="CHEBI:15378"/>
        <dbReference type="ChEBI" id="CHEBI:57618"/>
        <dbReference type="ChEBI" id="CHEBI:58210"/>
        <dbReference type="ChEBI" id="CHEBI:58483"/>
        <dbReference type="ChEBI" id="CHEBI:128753"/>
        <dbReference type="EC" id="1.17.7.3"/>
    </reaction>
</comment>
<comment type="cofactor">
    <cofactor evidence="1">
        <name>[4Fe-4S] cluster</name>
        <dbReference type="ChEBI" id="CHEBI:49883"/>
    </cofactor>
    <text evidence="1">Binds 1 [4Fe-4S] cluster.</text>
</comment>
<comment type="pathway">
    <text evidence="1">Isoprenoid biosynthesis; isopentenyl diphosphate biosynthesis via DXP pathway; isopentenyl diphosphate from 1-deoxy-D-xylulose 5-phosphate: step 5/6.</text>
</comment>
<comment type="similarity">
    <text evidence="1">Belongs to the IspG family.</text>
</comment>
<evidence type="ECO:0000255" key="1">
    <source>
        <dbReference type="HAMAP-Rule" id="MF_00159"/>
    </source>
</evidence>
<gene>
    <name evidence="1" type="primary">ispG</name>
    <name type="ordered locus">SYO3AOP1_0412</name>
</gene>
<keyword id="KW-0004">4Fe-4S</keyword>
<keyword id="KW-0408">Iron</keyword>
<keyword id="KW-0411">Iron-sulfur</keyword>
<keyword id="KW-0414">Isoprene biosynthesis</keyword>
<keyword id="KW-0479">Metal-binding</keyword>
<keyword id="KW-0560">Oxidoreductase</keyword>
<reference key="1">
    <citation type="journal article" date="2009" name="J. Bacteriol.">
        <title>Complete and draft genome sequences of six members of the Aquificales.</title>
        <authorList>
            <person name="Reysenbach A.-L."/>
            <person name="Hamamura N."/>
            <person name="Podar M."/>
            <person name="Griffiths E."/>
            <person name="Ferreira S."/>
            <person name="Hochstein R."/>
            <person name="Heidelberg J."/>
            <person name="Johnson J."/>
            <person name="Mead D."/>
            <person name="Pohorille A."/>
            <person name="Sarmiento M."/>
            <person name="Schweighofer K."/>
            <person name="Seshadri R."/>
            <person name="Voytek M.A."/>
        </authorList>
    </citation>
    <scope>NUCLEOTIDE SEQUENCE [LARGE SCALE GENOMIC DNA]</scope>
    <source>
        <strain>YO3AOP1</strain>
    </source>
</reference>